<reference key="1">
    <citation type="journal article" date="2000" name="Proc. Natl. Acad. Sci. U.S.A.">
        <title>Archaeal adaptation to higher temperatures revealed by genomic sequence of Thermoplasma volcanium.</title>
        <authorList>
            <person name="Kawashima T."/>
            <person name="Amano N."/>
            <person name="Koike H."/>
            <person name="Makino S."/>
            <person name="Higuchi S."/>
            <person name="Kawashima-Ohya Y."/>
            <person name="Watanabe K."/>
            <person name="Yamazaki M."/>
            <person name="Kanehori K."/>
            <person name="Kawamoto T."/>
            <person name="Nunoshiba T."/>
            <person name="Yamamoto Y."/>
            <person name="Aramaki H."/>
            <person name="Makino K."/>
            <person name="Suzuki M."/>
        </authorList>
    </citation>
    <scope>NUCLEOTIDE SEQUENCE [LARGE SCALE GENOMIC DNA]</scope>
    <source>
        <strain>ATCC 51530 / DSM 4299 / JCM 9571 / NBRC 15438 / GSS1</strain>
    </source>
</reference>
<protein>
    <recommendedName>
        <fullName evidence="1">Ribonuclease HII</fullName>
        <shortName evidence="1">RNase HII</shortName>
        <ecNumber evidence="1">3.1.26.4</ecNumber>
    </recommendedName>
</protein>
<name>RNH2_THEVO</name>
<feature type="chain" id="PRO_0000111673" description="Ribonuclease HII">
    <location>
        <begin position="1"/>
        <end position="212"/>
    </location>
</feature>
<feature type="domain" description="RNase H type-2" evidence="2">
    <location>
        <begin position="4"/>
        <end position="206"/>
    </location>
</feature>
<feature type="binding site" evidence="1">
    <location>
        <position position="10"/>
    </location>
    <ligand>
        <name>a divalent metal cation</name>
        <dbReference type="ChEBI" id="CHEBI:60240"/>
    </ligand>
</feature>
<feature type="binding site" evidence="1">
    <location>
        <position position="11"/>
    </location>
    <ligand>
        <name>a divalent metal cation</name>
        <dbReference type="ChEBI" id="CHEBI:60240"/>
    </ligand>
</feature>
<feature type="binding site" evidence="1">
    <location>
        <position position="103"/>
    </location>
    <ligand>
        <name>a divalent metal cation</name>
        <dbReference type="ChEBI" id="CHEBI:60240"/>
    </ligand>
</feature>
<accession>Q97CG6</accession>
<keyword id="KW-0963">Cytoplasm</keyword>
<keyword id="KW-0255">Endonuclease</keyword>
<keyword id="KW-0378">Hydrolase</keyword>
<keyword id="KW-0464">Manganese</keyword>
<keyword id="KW-0479">Metal-binding</keyword>
<keyword id="KW-0540">Nuclease</keyword>
<dbReference type="EC" id="3.1.26.4" evidence="1"/>
<dbReference type="EMBL" id="BA000011">
    <property type="protein sequence ID" value="BAB59277.1"/>
    <property type="status" value="ALT_INIT"/>
    <property type="molecule type" value="Genomic_DNA"/>
</dbReference>
<dbReference type="RefSeq" id="WP_048054063.1">
    <property type="nucleotide sequence ID" value="NC_002689.2"/>
</dbReference>
<dbReference type="SMR" id="Q97CG6"/>
<dbReference type="STRING" id="273116.gene:9380904"/>
<dbReference type="PaxDb" id="273116-14324349"/>
<dbReference type="GeneID" id="1441619"/>
<dbReference type="KEGG" id="tvo:TVG0142583"/>
<dbReference type="eggNOG" id="arCOG04121">
    <property type="taxonomic scope" value="Archaea"/>
</dbReference>
<dbReference type="HOGENOM" id="CLU_036532_0_4_2"/>
<dbReference type="OrthoDB" id="33866at2157"/>
<dbReference type="PhylomeDB" id="Q97CG6"/>
<dbReference type="Proteomes" id="UP000001017">
    <property type="component" value="Chromosome"/>
</dbReference>
<dbReference type="GO" id="GO:0005737">
    <property type="term" value="C:cytoplasm"/>
    <property type="evidence" value="ECO:0007669"/>
    <property type="project" value="UniProtKB-SubCell"/>
</dbReference>
<dbReference type="GO" id="GO:0032299">
    <property type="term" value="C:ribonuclease H2 complex"/>
    <property type="evidence" value="ECO:0007669"/>
    <property type="project" value="TreeGrafter"/>
</dbReference>
<dbReference type="GO" id="GO:0030145">
    <property type="term" value="F:manganese ion binding"/>
    <property type="evidence" value="ECO:0007669"/>
    <property type="project" value="UniProtKB-UniRule"/>
</dbReference>
<dbReference type="GO" id="GO:0003723">
    <property type="term" value="F:RNA binding"/>
    <property type="evidence" value="ECO:0007669"/>
    <property type="project" value="InterPro"/>
</dbReference>
<dbReference type="GO" id="GO:0004523">
    <property type="term" value="F:RNA-DNA hybrid ribonuclease activity"/>
    <property type="evidence" value="ECO:0007669"/>
    <property type="project" value="UniProtKB-UniRule"/>
</dbReference>
<dbReference type="GO" id="GO:0043137">
    <property type="term" value="P:DNA replication, removal of RNA primer"/>
    <property type="evidence" value="ECO:0007669"/>
    <property type="project" value="TreeGrafter"/>
</dbReference>
<dbReference type="GO" id="GO:0006298">
    <property type="term" value="P:mismatch repair"/>
    <property type="evidence" value="ECO:0007669"/>
    <property type="project" value="TreeGrafter"/>
</dbReference>
<dbReference type="CDD" id="cd07180">
    <property type="entry name" value="RNase_HII_archaea_like"/>
    <property type="match status" value="1"/>
</dbReference>
<dbReference type="Gene3D" id="3.30.420.10">
    <property type="entry name" value="Ribonuclease H-like superfamily/Ribonuclease H"/>
    <property type="match status" value="1"/>
</dbReference>
<dbReference type="HAMAP" id="MF_00052_A">
    <property type="entry name" value="RNase_HII_A"/>
    <property type="match status" value="1"/>
</dbReference>
<dbReference type="InterPro" id="IPR004649">
    <property type="entry name" value="RNase_H2_suA"/>
</dbReference>
<dbReference type="InterPro" id="IPR001352">
    <property type="entry name" value="RNase_HII/HIII"/>
</dbReference>
<dbReference type="InterPro" id="IPR024567">
    <property type="entry name" value="RNase_HII/HIII_dom"/>
</dbReference>
<dbReference type="InterPro" id="IPR020787">
    <property type="entry name" value="RNase_HII_arc"/>
</dbReference>
<dbReference type="InterPro" id="IPR012337">
    <property type="entry name" value="RNaseH-like_sf"/>
</dbReference>
<dbReference type="InterPro" id="IPR036397">
    <property type="entry name" value="RNaseH_sf"/>
</dbReference>
<dbReference type="NCBIfam" id="TIGR00729">
    <property type="entry name" value="ribonuclease HII"/>
    <property type="match status" value="1"/>
</dbReference>
<dbReference type="PANTHER" id="PTHR10954:SF23">
    <property type="entry name" value="RIBONUCLEASE"/>
    <property type="match status" value="1"/>
</dbReference>
<dbReference type="PANTHER" id="PTHR10954">
    <property type="entry name" value="RIBONUCLEASE H2 SUBUNIT A"/>
    <property type="match status" value="1"/>
</dbReference>
<dbReference type="Pfam" id="PF01351">
    <property type="entry name" value="RNase_HII"/>
    <property type="match status" value="1"/>
</dbReference>
<dbReference type="SUPFAM" id="SSF53098">
    <property type="entry name" value="Ribonuclease H-like"/>
    <property type="match status" value="1"/>
</dbReference>
<dbReference type="PROSITE" id="PS51975">
    <property type="entry name" value="RNASE_H_2"/>
    <property type="match status" value="1"/>
</dbReference>
<evidence type="ECO:0000255" key="1">
    <source>
        <dbReference type="HAMAP-Rule" id="MF_00052"/>
    </source>
</evidence>
<evidence type="ECO:0000255" key="2">
    <source>
        <dbReference type="PROSITE-ProRule" id="PRU01319"/>
    </source>
</evidence>
<evidence type="ECO:0000305" key="3"/>
<organism>
    <name type="scientific">Thermoplasma volcanium (strain ATCC 51530 / DSM 4299 / JCM 9571 / NBRC 15438 / GSS1)</name>
    <dbReference type="NCBI Taxonomy" id="273116"/>
    <lineage>
        <taxon>Archaea</taxon>
        <taxon>Methanobacteriati</taxon>
        <taxon>Thermoplasmatota</taxon>
        <taxon>Thermoplasmata</taxon>
        <taxon>Thermoplasmatales</taxon>
        <taxon>Thermoplasmataceae</taxon>
        <taxon>Thermoplasma</taxon>
    </lineage>
</organism>
<comment type="function">
    <text evidence="1">Endonuclease that specifically degrades the RNA of RNA-DNA hybrids.</text>
</comment>
<comment type="catalytic activity">
    <reaction evidence="1">
        <text>Endonucleolytic cleavage to 5'-phosphomonoester.</text>
        <dbReference type="EC" id="3.1.26.4"/>
    </reaction>
</comment>
<comment type="cofactor">
    <cofactor evidence="1">
        <name>Mn(2+)</name>
        <dbReference type="ChEBI" id="CHEBI:29035"/>
    </cofactor>
    <cofactor evidence="1">
        <name>Mg(2+)</name>
        <dbReference type="ChEBI" id="CHEBI:18420"/>
    </cofactor>
    <text evidence="1">Manganese or magnesium. Binds 1 divalent metal ion per monomer in the absence of substrate. May bind a second metal ion after substrate binding.</text>
</comment>
<comment type="subcellular location">
    <subcellularLocation>
        <location evidence="1">Cytoplasm</location>
    </subcellularLocation>
</comment>
<comment type="similarity">
    <text evidence="1">Belongs to the RNase HII family.</text>
</comment>
<comment type="sequence caution" evidence="3">
    <conflict type="erroneous initiation">
        <sequence resource="EMBL-CDS" id="BAB59277"/>
    </conflict>
</comment>
<proteinExistence type="inferred from homology"/>
<sequence>MHEEVQCGIDEAGRGPVIGPMVISIVCCKEEYLREIGVKDSKMLSRKRREYLFDKITKNCAYSYVVVSPETLNKDMASESLNKIEENYILELLSKAEGIVYIDCFDVIEERAEKYIREKSGKEVVCKHKADSIYPAVSAASIVSKVIRDREIDKIAEKYGFFGSGYPSDPRTIDFLRKAMQQGLDLRSVARIHWETYKKIKEDVESGQKKLF</sequence>
<gene>
    <name evidence="1" type="primary">rnhB</name>
    <name type="ordered locus">TV0135</name>
    <name type="ORF">TVG0142583</name>
</gene>